<reference key="1">
    <citation type="journal article" date="2003" name="Nature">
        <title>The genome sequence of Bacillus anthracis Ames and comparison to closely related bacteria.</title>
        <authorList>
            <person name="Read T.D."/>
            <person name="Peterson S.N."/>
            <person name="Tourasse N.J."/>
            <person name="Baillie L.W."/>
            <person name="Paulsen I.T."/>
            <person name="Nelson K.E."/>
            <person name="Tettelin H."/>
            <person name="Fouts D.E."/>
            <person name="Eisen J.A."/>
            <person name="Gill S.R."/>
            <person name="Holtzapple E.K."/>
            <person name="Okstad O.A."/>
            <person name="Helgason E."/>
            <person name="Rilstone J."/>
            <person name="Wu M."/>
            <person name="Kolonay J.F."/>
            <person name="Beanan M.J."/>
            <person name="Dodson R.J."/>
            <person name="Brinkac L.M."/>
            <person name="Gwinn M.L."/>
            <person name="DeBoy R.T."/>
            <person name="Madpu R."/>
            <person name="Daugherty S.C."/>
            <person name="Durkin A.S."/>
            <person name="Haft D.H."/>
            <person name="Nelson W.C."/>
            <person name="Peterson J.D."/>
            <person name="Pop M."/>
            <person name="Khouri H.M."/>
            <person name="Radune D."/>
            <person name="Benton J.L."/>
            <person name="Mahamoud Y."/>
            <person name="Jiang L."/>
            <person name="Hance I.R."/>
            <person name="Weidman J.F."/>
            <person name="Berry K.J."/>
            <person name="Plaut R.D."/>
            <person name="Wolf A.M."/>
            <person name="Watkins K.L."/>
            <person name="Nierman W.C."/>
            <person name="Hazen A."/>
            <person name="Cline R.T."/>
            <person name="Redmond C."/>
            <person name="Thwaite J.E."/>
            <person name="White O."/>
            <person name="Salzberg S.L."/>
            <person name="Thomason B."/>
            <person name="Friedlander A.M."/>
            <person name="Koehler T.M."/>
            <person name="Hanna P.C."/>
            <person name="Kolstoe A.-B."/>
            <person name="Fraser C.M."/>
        </authorList>
    </citation>
    <scope>NUCLEOTIDE SEQUENCE [LARGE SCALE GENOMIC DNA]</scope>
    <source>
        <strain>Ames / isolate Porton</strain>
    </source>
</reference>
<reference key="2">
    <citation type="journal article" date="2009" name="J. Bacteriol.">
        <title>The complete genome sequence of Bacillus anthracis Ames 'Ancestor'.</title>
        <authorList>
            <person name="Ravel J."/>
            <person name="Jiang L."/>
            <person name="Stanley S.T."/>
            <person name="Wilson M.R."/>
            <person name="Decker R.S."/>
            <person name="Read T.D."/>
            <person name="Worsham P."/>
            <person name="Keim P.S."/>
            <person name="Salzberg S.L."/>
            <person name="Fraser-Liggett C.M."/>
            <person name="Rasko D.A."/>
        </authorList>
    </citation>
    <scope>NUCLEOTIDE SEQUENCE [LARGE SCALE GENOMIC DNA]</scope>
    <source>
        <strain>Ames ancestor</strain>
    </source>
</reference>
<reference key="3">
    <citation type="submission" date="2004-01" db="EMBL/GenBank/DDBJ databases">
        <title>Complete genome sequence of Bacillus anthracis Sterne.</title>
        <authorList>
            <person name="Brettin T.S."/>
            <person name="Bruce D."/>
            <person name="Challacombe J.F."/>
            <person name="Gilna P."/>
            <person name="Han C."/>
            <person name="Hill K."/>
            <person name="Hitchcock P."/>
            <person name="Jackson P."/>
            <person name="Keim P."/>
            <person name="Longmire J."/>
            <person name="Lucas S."/>
            <person name="Okinaka R."/>
            <person name="Richardson P."/>
            <person name="Rubin E."/>
            <person name="Tice H."/>
        </authorList>
    </citation>
    <scope>NUCLEOTIDE SEQUENCE [LARGE SCALE GENOMIC DNA]</scope>
    <source>
        <strain>Sterne</strain>
    </source>
</reference>
<accession>Q81QA7</accession>
<accession>Q6HYH9</accession>
<accession>Q6KSI6</accession>
<proteinExistence type="inferred from homology"/>
<keyword id="KW-1185">Reference proteome</keyword>
<evidence type="ECO:0000305" key="1"/>
<protein>
    <recommendedName>
        <fullName>UPF0457 protein BA_2525/GBAA_2525/BAS2348</fullName>
    </recommendedName>
</protein>
<name>Y2525_BACAN</name>
<sequence length="66" mass="7201">MAEITIPLRDVIEVTEDATYAGVEVTSAIRIGTAYGTTDRILIKTVKQNYVLFTTNKVSILNAINA</sequence>
<feature type="chain" id="PRO_0000294487" description="UPF0457 protein BA_2525/GBAA_2525/BAS2348">
    <location>
        <begin position="1"/>
        <end position="66"/>
    </location>
</feature>
<organism>
    <name type="scientific">Bacillus anthracis</name>
    <dbReference type="NCBI Taxonomy" id="1392"/>
    <lineage>
        <taxon>Bacteria</taxon>
        <taxon>Bacillati</taxon>
        <taxon>Bacillota</taxon>
        <taxon>Bacilli</taxon>
        <taxon>Bacillales</taxon>
        <taxon>Bacillaceae</taxon>
        <taxon>Bacillus</taxon>
        <taxon>Bacillus cereus group</taxon>
    </lineage>
</organism>
<gene>
    <name type="ordered locus">BA_2525</name>
    <name type="ordered locus">GBAA_2525</name>
    <name type="ordered locus">BAS2348</name>
</gene>
<comment type="similarity">
    <text evidence="1">Belongs to the UPF0457 family.</text>
</comment>
<dbReference type="EMBL" id="AE016879">
    <property type="protein sequence ID" value="AAP26380.1"/>
    <property type="molecule type" value="Genomic_DNA"/>
</dbReference>
<dbReference type="EMBL" id="AE017334">
    <property type="status" value="NOT_ANNOTATED_CDS"/>
    <property type="molecule type" value="Genomic_DNA"/>
</dbReference>
<dbReference type="EMBL" id="AE017225">
    <property type="protein sequence ID" value="AAT54660.1"/>
    <property type="molecule type" value="Genomic_DNA"/>
</dbReference>
<dbReference type="RefSeq" id="NP_844894.1">
    <property type="nucleotide sequence ID" value="NC_003997.3"/>
</dbReference>
<dbReference type="RefSeq" id="YP_028609.1">
    <property type="nucleotide sequence ID" value="NC_005945.1"/>
</dbReference>
<dbReference type="DNASU" id="1085142"/>
<dbReference type="KEGG" id="ban:BA_2525"/>
<dbReference type="KEGG" id="bat:BAS2348"/>
<dbReference type="PATRIC" id="fig|198094.11.peg.2501"/>
<dbReference type="eggNOG" id="ENOG50332PH">
    <property type="taxonomic scope" value="Bacteria"/>
</dbReference>
<dbReference type="HOGENOM" id="CLU_174851_1_0_9"/>
<dbReference type="OMA" id="RIGPPYG"/>
<dbReference type="Proteomes" id="UP000000427">
    <property type="component" value="Chromosome"/>
</dbReference>
<dbReference type="Proteomes" id="UP000000594">
    <property type="component" value="Chromosome"/>
</dbReference>
<dbReference type="InterPro" id="IPR055365">
    <property type="entry name" value="PH_SunI-like"/>
</dbReference>
<dbReference type="Pfam" id="PF23491">
    <property type="entry name" value="bPH_8"/>
    <property type="match status" value="1"/>
</dbReference>